<feature type="chain" id="PRO_0000295224" description="CUGBP Elav-like family member 4">
    <location>
        <begin position="1"/>
        <end position="486"/>
    </location>
</feature>
<feature type="domain" description="RRM 1" evidence="2">
    <location>
        <begin position="54"/>
        <end position="135"/>
    </location>
</feature>
<feature type="domain" description="RRM 2" evidence="2">
    <location>
        <begin position="152"/>
        <end position="232"/>
    </location>
</feature>
<feature type="domain" description="RRM 3" evidence="2">
    <location>
        <begin position="404"/>
        <end position="479"/>
    </location>
</feature>
<feature type="region of interest" description="Sufficient for RNA-binding and MSE-dependent splicing activity" evidence="1">
    <location>
        <begin position="1"/>
        <end position="298"/>
    </location>
</feature>
<feature type="region of interest" description="Disordered" evidence="3">
    <location>
        <begin position="18"/>
        <end position="39"/>
    </location>
</feature>
<feature type="region of interest" description="Disordered" evidence="3">
    <location>
        <begin position="121"/>
        <end position="149"/>
    </location>
</feature>
<feature type="region of interest" description="Necessary for TNNT2 exon 5 inclusion" evidence="1">
    <location>
        <begin position="239"/>
        <end position="258"/>
    </location>
</feature>
<feature type="compositionally biased region" description="Polar residues" evidence="3">
    <location>
        <begin position="18"/>
        <end position="28"/>
    </location>
</feature>
<feature type="compositionally biased region" description="Polar residues" evidence="3">
    <location>
        <begin position="138"/>
        <end position="149"/>
    </location>
</feature>
<feature type="splice variant" id="VSP_026841" description="In isoform 2 and isoform 3." evidence="4">
    <original>QD</original>
    <variation>H</variation>
    <location>
        <begin position="150"/>
        <end position="151"/>
    </location>
</feature>
<feature type="splice variant" id="VSP_026842" description="In isoform 3." evidence="4">
    <location>
        <position position="268"/>
    </location>
</feature>
<feature type="splice variant" id="VSP_026843" description="In isoform 2 and isoform 3." evidence="4">
    <location>
        <begin position="417"/>
        <end position="444"/>
    </location>
</feature>
<feature type="sequence conflict" description="In Ref. 1; CAH92712." evidence="5" ref="1">
    <original>C</original>
    <variation>S</variation>
    <location>
        <position position="103"/>
    </location>
</feature>
<feature type="sequence conflict" description="In Ref. 1; CAH92712." evidence="5" ref="1">
    <original>F</original>
    <variation>L</variation>
    <location>
        <position position="155"/>
    </location>
</feature>
<feature type="sequence conflict" description="In Ref. 1; CAI29735." evidence="5" ref="1">
    <original>N</original>
    <variation>S</variation>
    <location>
        <position position="210"/>
    </location>
</feature>
<feature type="sequence conflict" description="In Ref. 1; CAI29735." evidence="5" ref="1">
    <original>V</original>
    <variation>A</variation>
    <location>
        <position position="227"/>
    </location>
</feature>
<feature type="sequence conflict" description="In Ref. 1; CAI29735." evidence="5" ref="1">
    <original>F</original>
    <variation>S</variation>
    <location>
        <position position="258"/>
    </location>
</feature>
<feature type="sequence conflict" description="In Ref. 1; CAH92712." evidence="5" ref="1">
    <original>A</original>
    <variation>V</variation>
    <location>
        <position position="354"/>
    </location>
</feature>
<organism>
    <name type="scientific">Pongo abelii</name>
    <name type="common">Sumatran orangutan</name>
    <name type="synonym">Pongo pygmaeus abelii</name>
    <dbReference type="NCBI Taxonomy" id="9601"/>
    <lineage>
        <taxon>Eukaryota</taxon>
        <taxon>Metazoa</taxon>
        <taxon>Chordata</taxon>
        <taxon>Craniata</taxon>
        <taxon>Vertebrata</taxon>
        <taxon>Euteleostomi</taxon>
        <taxon>Mammalia</taxon>
        <taxon>Eutheria</taxon>
        <taxon>Euarchontoglires</taxon>
        <taxon>Primates</taxon>
        <taxon>Haplorrhini</taxon>
        <taxon>Catarrhini</taxon>
        <taxon>Hominidae</taxon>
        <taxon>Pongo</taxon>
    </lineage>
</organism>
<sequence>MYIKMATLANGQADNASLSTNGLGSSPGSAGHMNGLSHSPGNPSTIPMKDHDAIKLFIGQIPRNLDEKDLKPLFEEFGKIYELTVLKDRFTGMHKGCAFLTYCERESALKAQSALHEQKTLPGMNRPIQVKPADSESRGGSSCLRQPPSQDRKLFVGMLNKQQSEDDVRRLFEAFGNIEECTILRGPDGNSKGCAFVKYSSHAEAQAAINALHGSQTMPGASSSLVVKFADTDKERTMRRMQQMAGQMGMFNPMAIPFGAYGAYAQALMQQQAALMASVAQGGYLNPMAAFAAAQMQQMAALNMNGLAAAPMTPTSGGSTPPGITAPAVPSIPSPIGVNGFTGLPPQANGQPAAEAVFANGIHPYPAQSPTAADPLQQAYAGVQQYAGPAAYPAAYGQISQAFPQPPPMIPQQQREGPEGCNLFIYHLPQEFGDAELMQMFLPFGFVSFDNPASAQTAIQAMNGFQIGMKRLKVQLKRPKDANRPY</sequence>
<dbReference type="EMBL" id="CR859631">
    <property type="protein sequence ID" value="CAH91793.1"/>
    <property type="molecule type" value="mRNA"/>
</dbReference>
<dbReference type="EMBL" id="CR860590">
    <property type="protein sequence ID" value="CAH92712.1"/>
    <property type="molecule type" value="mRNA"/>
</dbReference>
<dbReference type="EMBL" id="CR926110">
    <property type="protein sequence ID" value="CAI29735.1"/>
    <property type="molecule type" value="mRNA"/>
</dbReference>
<dbReference type="RefSeq" id="NP_001127577.1">
    <property type="nucleotide sequence ID" value="NM_001134105.1"/>
</dbReference>
<dbReference type="RefSeq" id="NP_001128833.1">
    <molecule id="Q5NVC8-3"/>
    <property type="nucleotide sequence ID" value="NM_001135361.2"/>
</dbReference>
<dbReference type="RefSeq" id="XP_024091518.1">
    <molecule id="Q5NVC8-1"/>
    <property type="nucleotide sequence ID" value="XM_024235750.3"/>
</dbReference>
<dbReference type="SMR" id="Q5NVC8"/>
<dbReference type="FunCoup" id="Q5NVC8">
    <property type="interactions" value="1639"/>
</dbReference>
<dbReference type="STRING" id="9601.ENSPPYP00000010242"/>
<dbReference type="Ensembl" id="ENSPPYT00000010647.3">
    <molecule id="Q5NVC8-3"/>
    <property type="protein sequence ID" value="ENSPPYP00000010242.3"/>
    <property type="gene ID" value="ENSPPYG00000009118.3"/>
</dbReference>
<dbReference type="Ensembl" id="ENSPPYT00000055912.1">
    <molecule id="Q5NVC8-2"/>
    <property type="protein sequence ID" value="ENSPPYP00000035998.1"/>
    <property type="gene ID" value="ENSPPYG00000009118.3"/>
</dbReference>
<dbReference type="Ensembl" id="ENSPPYT00000056896.1">
    <molecule id="Q5NVC8-1"/>
    <property type="protein sequence ID" value="ENSPPYP00000026335.1"/>
    <property type="gene ID" value="ENSPPYG00000009118.3"/>
</dbReference>
<dbReference type="GeneID" id="100174655"/>
<dbReference type="KEGG" id="pon:100174655"/>
<dbReference type="CTD" id="56853"/>
<dbReference type="eggNOG" id="KOG0146">
    <property type="taxonomic scope" value="Eukaryota"/>
</dbReference>
<dbReference type="GeneTree" id="ENSGT00940000158673"/>
<dbReference type="InParanoid" id="Q5NVC8"/>
<dbReference type="OMA" id="FTGMHKX"/>
<dbReference type="OrthoDB" id="267048at2759"/>
<dbReference type="Proteomes" id="UP000001595">
    <property type="component" value="Chromosome 18"/>
</dbReference>
<dbReference type="GO" id="GO:0005737">
    <property type="term" value="C:cytoplasm"/>
    <property type="evidence" value="ECO:0007669"/>
    <property type="project" value="UniProtKB-SubCell"/>
</dbReference>
<dbReference type="GO" id="GO:0005654">
    <property type="term" value="C:nucleoplasm"/>
    <property type="evidence" value="ECO:0007669"/>
    <property type="project" value="Ensembl"/>
</dbReference>
<dbReference type="GO" id="GO:0098794">
    <property type="term" value="C:postsynapse"/>
    <property type="evidence" value="ECO:0007669"/>
    <property type="project" value="GOC"/>
</dbReference>
<dbReference type="GO" id="GO:0003729">
    <property type="term" value="F:mRNA binding"/>
    <property type="evidence" value="ECO:0007669"/>
    <property type="project" value="Ensembl"/>
</dbReference>
<dbReference type="GO" id="GO:0036002">
    <property type="term" value="F:pre-mRNA binding"/>
    <property type="evidence" value="ECO:0007669"/>
    <property type="project" value="Ensembl"/>
</dbReference>
<dbReference type="GO" id="GO:0000380">
    <property type="term" value="P:alternative mRNA splicing, via spliceosome"/>
    <property type="evidence" value="ECO:0007669"/>
    <property type="project" value="Ensembl"/>
</dbReference>
<dbReference type="GO" id="GO:0060079">
    <property type="term" value="P:excitatory postsynaptic potential"/>
    <property type="evidence" value="ECO:0007669"/>
    <property type="project" value="Ensembl"/>
</dbReference>
<dbReference type="GO" id="GO:0001701">
    <property type="term" value="P:in utero embryonic development"/>
    <property type="evidence" value="ECO:0007669"/>
    <property type="project" value="Ensembl"/>
</dbReference>
<dbReference type="GO" id="GO:0006376">
    <property type="term" value="P:mRNA splice site recognition"/>
    <property type="evidence" value="ECO:0007669"/>
    <property type="project" value="Ensembl"/>
</dbReference>
<dbReference type="GO" id="GO:0090394">
    <property type="term" value="P:negative regulation of excitatory postsynaptic potential"/>
    <property type="evidence" value="ECO:0007669"/>
    <property type="project" value="Ensembl"/>
</dbReference>
<dbReference type="GO" id="GO:0048025">
    <property type="term" value="P:negative regulation of mRNA splicing, via spliceosome"/>
    <property type="evidence" value="ECO:0007669"/>
    <property type="project" value="Ensembl"/>
</dbReference>
<dbReference type="GO" id="GO:0048026">
    <property type="term" value="P:positive regulation of mRNA splicing, via spliceosome"/>
    <property type="evidence" value="ECO:0000250"/>
    <property type="project" value="UniProtKB"/>
</dbReference>
<dbReference type="GO" id="GO:0000381">
    <property type="term" value="P:regulation of alternative mRNA splicing, via spliceosome"/>
    <property type="evidence" value="ECO:0007669"/>
    <property type="project" value="Ensembl"/>
</dbReference>
<dbReference type="GO" id="GO:1902866">
    <property type="term" value="P:regulation of retina development in camera-type eye"/>
    <property type="evidence" value="ECO:0007669"/>
    <property type="project" value="Ensembl"/>
</dbReference>
<dbReference type="CDD" id="cd12632">
    <property type="entry name" value="RRM1_CELF3_4_5_6"/>
    <property type="match status" value="1"/>
</dbReference>
<dbReference type="CDD" id="cd12635">
    <property type="entry name" value="RRM2_CELF3_4_5_6"/>
    <property type="match status" value="1"/>
</dbReference>
<dbReference type="FunFam" id="3.30.70.330:FF:000007">
    <property type="entry name" value="CUGBP Elav-like family member 4 isoform 3"/>
    <property type="match status" value="1"/>
</dbReference>
<dbReference type="FunFam" id="3.30.70.330:FF:000010">
    <property type="entry name" value="CUGBP Elav-like family member 4 isoform 3"/>
    <property type="match status" value="1"/>
</dbReference>
<dbReference type="FunFam" id="3.30.70.330:FF:000140">
    <property type="entry name" value="CUGBP Elav-like family member 4 isoform 3"/>
    <property type="match status" value="1"/>
</dbReference>
<dbReference type="Gene3D" id="3.30.70.330">
    <property type="match status" value="3"/>
</dbReference>
<dbReference type="InterPro" id="IPR034648">
    <property type="entry name" value="CELF3/4/5/6_RRM1"/>
</dbReference>
<dbReference type="InterPro" id="IPR012677">
    <property type="entry name" value="Nucleotide-bd_a/b_plait_sf"/>
</dbReference>
<dbReference type="InterPro" id="IPR035979">
    <property type="entry name" value="RBD_domain_sf"/>
</dbReference>
<dbReference type="InterPro" id="IPR000504">
    <property type="entry name" value="RRM_dom"/>
</dbReference>
<dbReference type="PANTHER" id="PTHR24012">
    <property type="entry name" value="RNA BINDING PROTEIN"/>
    <property type="match status" value="1"/>
</dbReference>
<dbReference type="Pfam" id="PF00076">
    <property type="entry name" value="RRM_1"/>
    <property type="match status" value="3"/>
</dbReference>
<dbReference type="SMART" id="SM00360">
    <property type="entry name" value="RRM"/>
    <property type="match status" value="3"/>
</dbReference>
<dbReference type="SUPFAM" id="SSF54928">
    <property type="entry name" value="RNA-binding domain, RBD"/>
    <property type="match status" value="2"/>
</dbReference>
<dbReference type="PROSITE" id="PS50102">
    <property type="entry name" value="RRM"/>
    <property type="match status" value="3"/>
</dbReference>
<evidence type="ECO:0000250" key="1"/>
<evidence type="ECO:0000255" key="2">
    <source>
        <dbReference type="PROSITE-ProRule" id="PRU00176"/>
    </source>
</evidence>
<evidence type="ECO:0000256" key="3">
    <source>
        <dbReference type="SAM" id="MobiDB-lite"/>
    </source>
</evidence>
<evidence type="ECO:0000303" key="4">
    <source ref="1"/>
</evidence>
<evidence type="ECO:0000305" key="5"/>
<name>CELF4_PONAB</name>
<protein>
    <recommendedName>
        <fullName>CUGBP Elav-like family member 4</fullName>
        <shortName>CELF-4</shortName>
    </recommendedName>
    <alternativeName>
        <fullName>Bruno-like protein 4</fullName>
    </alternativeName>
    <alternativeName>
        <fullName>CUG-BP- and ETR-3-like factor 4</fullName>
    </alternativeName>
    <alternativeName>
        <fullName>RNA-binding protein BRUNOL-4</fullName>
    </alternativeName>
</protein>
<comment type="function">
    <text evidence="1">RNA-binding protein implicated in the regulation of pre-mRNA alternative splicing. Mediates exon inclusion and/or exclusion in pre-mRNA that are subject to tissue-specific and developmentally regulated alternative splicing. Specifically activates exon 5 inclusion of cardiac isoforms of TNNT2 during heart remodeling at the juvenile to adult transition. Promotes exclusion of both the smooth muscle (SM) and non-muscle (NM) exons in actinin pre-mRNAs. Activates the splicing of MAPT/Tau exon 10. Binds to muscle-specific splicing enhancer (MSE) intronic sites flanking the alternative exon 5 of TNNT2 pre-mRNA (By similarity).</text>
</comment>
<comment type="subcellular location">
    <subcellularLocation>
        <location evidence="1">Nucleus</location>
    </subcellularLocation>
    <subcellularLocation>
        <location evidence="1">Cytoplasm</location>
    </subcellularLocation>
</comment>
<comment type="alternative products">
    <event type="alternative splicing"/>
    <isoform>
        <id>Q5NVC8-1</id>
        <name>1</name>
        <sequence type="displayed"/>
    </isoform>
    <isoform>
        <id>Q5NVC8-2</id>
        <name>2</name>
        <sequence type="described" ref="VSP_026841 VSP_026843"/>
    </isoform>
    <isoform>
        <id>Q5NVC8-3</id>
        <name>3</name>
        <sequence type="described" ref="VSP_026841 VSP_026842 VSP_026843"/>
    </isoform>
</comment>
<comment type="similarity">
    <text evidence="5">Belongs to the CELF/BRUNOL family.</text>
</comment>
<reference key="1">
    <citation type="submission" date="2004-11" db="EMBL/GenBank/DDBJ databases">
        <authorList>
            <consortium name="The German cDNA consortium"/>
        </authorList>
    </citation>
    <scope>NUCLEOTIDE SEQUENCE [LARGE SCALE MRNA] (ISOFORMS 1; 2 AND 3)</scope>
    <source>
        <tissue>Brain cortex</tissue>
    </source>
</reference>
<gene>
    <name type="primary">CELF4</name>
    <name type="synonym">BRUNOL4</name>
</gene>
<accession>Q5NVC8</accession>
<accession>Q5R6A4</accession>
<accession>Q5R8W7</accession>
<keyword id="KW-0010">Activator</keyword>
<keyword id="KW-0025">Alternative splicing</keyword>
<keyword id="KW-0963">Cytoplasm</keyword>
<keyword id="KW-0507">mRNA processing</keyword>
<keyword id="KW-0508">mRNA splicing</keyword>
<keyword id="KW-0539">Nucleus</keyword>
<keyword id="KW-1185">Reference proteome</keyword>
<keyword id="KW-0677">Repeat</keyword>
<keyword id="KW-0694">RNA-binding</keyword>
<proteinExistence type="evidence at transcript level"/>